<gene>
    <name type="primary">Cimip6</name>
</gene>
<reference key="1">
    <citation type="journal article" date="2005" name="Science">
        <title>The transcriptional landscape of the mammalian genome.</title>
        <authorList>
            <person name="Carninci P."/>
            <person name="Kasukawa T."/>
            <person name="Katayama S."/>
            <person name="Gough J."/>
            <person name="Frith M.C."/>
            <person name="Maeda N."/>
            <person name="Oyama R."/>
            <person name="Ravasi T."/>
            <person name="Lenhard B."/>
            <person name="Wells C."/>
            <person name="Kodzius R."/>
            <person name="Shimokawa K."/>
            <person name="Bajic V.B."/>
            <person name="Brenner S.E."/>
            <person name="Batalov S."/>
            <person name="Forrest A.R."/>
            <person name="Zavolan M."/>
            <person name="Davis M.J."/>
            <person name="Wilming L.G."/>
            <person name="Aidinis V."/>
            <person name="Allen J.E."/>
            <person name="Ambesi-Impiombato A."/>
            <person name="Apweiler R."/>
            <person name="Aturaliya R.N."/>
            <person name="Bailey T.L."/>
            <person name="Bansal M."/>
            <person name="Baxter L."/>
            <person name="Beisel K.W."/>
            <person name="Bersano T."/>
            <person name="Bono H."/>
            <person name="Chalk A.M."/>
            <person name="Chiu K.P."/>
            <person name="Choudhary V."/>
            <person name="Christoffels A."/>
            <person name="Clutterbuck D.R."/>
            <person name="Crowe M.L."/>
            <person name="Dalla E."/>
            <person name="Dalrymple B.P."/>
            <person name="de Bono B."/>
            <person name="Della Gatta G."/>
            <person name="di Bernardo D."/>
            <person name="Down T."/>
            <person name="Engstrom P."/>
            <person name="Fagiolini M."/>
            <person name="Faulkner G."/>
            <person name="Fletcher C.F."/>
            <person name="Fukushima T."/>
            <person name="Furuno M."/>
            <person name="Futaki S."/>
            <person name="Gariboldi M."/>
            <person name="Georgii-Hemming P."/>
            <person name="Gingeras T.R."/>
            <person name="Gojobori T."/>
            <person name="Green R.E."/>
            <person name="Gustincich S."/>
            <person name="Harbers M."/>
            <person name="Hayashi Y."/>
            <person name="Hensch T.K."/>
            <person name="Hirokawa N."/>
            <person name="Hill D."/>
            <person name="Huminiecki L."/>
            <person name="Iacono M."/>
            <person name="Ikeo K."/>
            <person name="Iwama A."/>
            <person name="Ishikawa T."/>
            <person name="Jakt M."/>
            <person name="Kanapin A."/>
            <person name="Katoh M."/>
            <person name="Kawasawa Y."/>
            <person name="Kelso J."/>
            <person name="Kitamura H."/>
            <person name="Kitano H."/>
            <person name="Kollias G."/>
            <person name="Krishnan S.P."/>
            <person name="Kruger A."/>
            <person name="Kummerfeld S.K."/>
            <person name="Kurochkin I.V."/>
            <person name="Lareau L.F."/>
            <person name="Lazarevic D."/>
            <person name="Lipovich L."/>
            <person name="Liu J."/>
            <person name="Liuni S."/>
            <person name="McWilliam S."/>
            <person name="Madan Babu M."/>
            <person name="Madera M."/>
            <person name="Marchionni L."/>
            <person name="Matsuda H."/>
            <person name="Matsuzawa S."/>
            <person name="Miki H."/>
            <person name="Mignone F."/>
            <person name="Miyake S."/>
            <person name="Morris K."/>
            <person name="Mottagui-Tabar S."/>
            <person name="Mulder N."/>
            <person name="Nakano N."/>
            <person name="Nakauchi H."/>
            <person name="Ng P."/>
            <person name="Nilsson R."/>
            <person name="Nishiguchi S."/>
            <person name="Nishikawa S."/>
            <person name="Nori F."/>
            <person name="Ohara O."/>
            <person name="Okazaki Y."/>
            <person name="Orlando V."/>
            <person name="Pang K.C."/>
            <person name="Pavan W.J."/>
            <person name="Pavesi G."/>
            <person name="Pesole G."/>
            <person name="Petrovsky N."/>
            <person name="Piazza S."/>
            <person name="Reed J."/>
            <person name="Reid J.F."/>
            <person name="Ring B.Z."/>
            <person name="Ringwald M."/>
            <person name="Rost B."/>
            <person name="Ruan Y."/>
            <person name="Salzberg S.L."/>
            <person name="Sandelin A."/>
            <person name="Schneider C."/>
            <person name="Schoenbach C."/>
            <person name="Sekiguchi K."/>
            <person name="Semple C.A."/>
            <person name="Seno S."/>
            <person name="Sessa L."/>
            <person name="Sheng Y."/>
            <person name="Shibata Y."/>
            <person name="Shimada H."/>
            <person name="Shimada K."/>
            <person name="Silva D."/>
            <person name="Sinclair B."/>
            <person name="Sperling S."/>
            <person name="Stupka E."/>
            <person name="Sugiura K."/>
            <person name="Sultana R."/>
            <person name="Takenaka Y."/>
            <person name="Taki K."/>
            <person name="Tammoja K."/>
            <person name="Tan S.L."/>
            <person name="Tang S."/>
            <person name="Taylor M.S."/>
            <person name="Tegner J."/>
            <person name="Teichmann S.A."/>
            <person name="Ueda H.R."/>
            <person name="van Nimwegen E."/>
            <person name="Verardo R."/>
            <person name="Wei C.L."/>
            <person name="Yagi K."/>
            <person name="Yamanishi H."/>
            <person name="Zabarovsky E."/>
            <person name="Zhu S."/>
            <person name="Zimmer A."/>
            <person name="Hide W."/>
            <person name="Bult C."/>
            <person name="Grimmond S.M."/>
            <person name="Teasdale R.D."/>
            <person name="Liu E.T."/>
            <person name="Brusic V."/>
            <person name="Quackenbush J."/>
            <person name="Wahlestedt C."/>
            <person name="Mattick J.S."/>
            <person name="Hume D.A."/>
            <person name="Kai C."/>
            <person name="Sasaki D."/>
            <person name="Tomaru Y."/>
            <person name="Fukuda S."/>
            <person name="Kanamori-Katayama M."/>
            <person name="Suzuki M."/>
            <person name="Aoki J."/>
            <person name="Arakawa T."/>
            <person name="Iida J."/>
            <person name="Imamura K."/>
            <person name="Itoh M."/>
            <person name="Kato T."/>
            <person name="Kawaji H."/>
            <person name="Kawagashira N."/>
            <person name="Kawashima T."/>
            <person name="Kojima M."/>
            <person name="Kondo S."/>
            <person name="Konno H."/>
            <person name="Nakano K."/>
            <person name="Ninomiya N."/>
            <person name="Nishio T."/>
            <person name="Okada M."/>
            <person name="Plessy C."/>
            <person name="Shibata K."/>
            <person name="Shiraki T."/>
            <person name="Suzuki S."/>
            <person name="Tagami M."/>
            <person name="Waki K."/>
            <person name="Watahiki A."/>
            <person name="Okamura-Oho Y."/>
            <person name="Suzuki H."/>
            <person name="Kawai J."/>
            <person name="Hayashizaki Y."/>
        </authorList>
    </citation>
    <scope>NUCLEOTIDE SEQUENCE [LARGE SCALE MRNA] (ISOFORM 2)</scope>
    <source>
        <strain>C57BL/6J</strain>
        <tissue>Testis</tissue>
    </source>
</reference>
<reference key="2">
    <citation type="journal article" date="2009" name="PLoS Biol.">
        <title>Lineage-specific biology revealed by a finished genome assembly of the mouse.</title>
        <authorList>
            <person name="Church D.M."/>
            <person name="Goodstadt L."/>
            <person name="Hillier L.W."/>
            <person name="Zody M.C."/>
            <person name="Goldstein S."/>
            <person name="She X."/>
            <person name="Bult C.J."/>
            <person name="Agarwala R."/>
            <person name="Cherry J.L."/>
            <person name="DiCuccio M."/>
            <person name="Hlavina W."/>
            <person name="Kapustin Y."/>
            <person name="Meric P."/>
            <person name="Maglott D."/>
            <person name="Birtle Z."/>
            <person name="Marques A.C."/>
            <person name="Graves T."/>
            <person name="Zhou S."/>
            <person name="Teague B."/>
            <person name="Potamousis K."/>
            <person name="Churas C."/>
            <person name="Place M."/>
            <person name="Herschleb J."/>
            <person name="Runnheim R."/>
            <person name="Forrest D."/>
            <person name="Amos-Landgraf J."/>
            <person name="Schwartz D.C."/>
            <person name="Cheng Z."/>
            <person name="Lindblad-Toh K."/>
            <person name="Eichler E.E."/>
            <person name="Ponting C.P."/>
        </authorList>
    </citation>
    <scope>NUCLEOTIDE SEQUENCE [LARGE SCALE GENOMIC DNA]</scope>
    <source>
        <strain>C57BL/6J</strain>
    </source>
</reference>
<comment type="subcellular location">
    <subcellularLocation>
        <location evidence="4">Cell projection</location>
        <location evidence="4">Cilium</location>
    </subcellularLocation>
</comment>
<comment type="alternative products">
    <event type="alternative splicing"/>
    <isoform>
        <id>Q5SPV6-1</id>
        <name>1</name>
        <sequence type="displayed"/>
    </isoform>
    <isoform>
        <id>Q5SPV6-2</id>
        <name>2</name>
        <sequence type="described" ref="VSP_033354"/>
    </isoform>
</comment>
<name>CMIP6_MOUSE</name>
<evidence type="ECO:0000250" key="1">
    <source>
        <dbReference type="UniProtKB" id="Q8N5S3"/>
    </source>
</evidence>
<evidence type="ECO:0000256" key="2">
    <source>
        <dbReference type="SAM" id="MobiDB-lite"/>
    </source>
</evidence>
<evidence type="ECO:0000303" key="3">
    <source>
    </source>
</evidence>
<evidence type="ECO:0000305" key="4"/>
<keyword id="KW-0025">Alternative splicing</keyword>
<keyword id="KW-0966">Cell projection</keyword>
<keyword id="KW-1185">Reference proteome</keyword>
<feature type="chain" id="PRO_0000332214" description="Ciliary microtubule inner protein 6">
    <location>
        <begin position="1"/>
        <end position="233"/>
    </location>
</feature>
<feature type="region of interest" description="Disordered" evidence="2">
    <location>
        <begin position="1"/>
        <end position="45"/>
    </location>
</feature>
<feature type="region of interest" description="Mn" evidence="1">
    <location>
        <begin position="127"/>
        <end position="159"/>
    </location>
</feature>
<feature type="region of interest" description="Disordered" evidence="2">
    <location>
        <begin position="192"/>
        <end position="233"/>
    </location>
</feature>
<feature type="compositionally biased region" description="Basic and acidic residues" evidence="2">
    <location>
        <begin position="1"/>
        <end position="14"/>
    </location>
</feature>
<feature type="compositionally biased region" description="Basic and acidic residues" evidence="2">
    <location>
        <begin position="21"/>
        <end position="33"/>
    </location>
</feature>
<feature type="compositionally biased region" description="Polar residues" evidence="2">
    <location>
        <begin position="195"/>
        <end position="233"/>
    </location>
</feature>
<feature type="splice variant" id="VSP_033354" description="In isoform 2." evidence="3">
    <location>
        <begin position="1"/>
        <end position="120"/>
    </location>
</feature>
<proteinExistence type="evidence at transcript level"/>
<dbReference type="EMBL" id="AK015698">
    <property type="protein sequence ID" value="BAB29936.1"/>
    <property type="molecule type" value="mRNA"/>
</dbReference>
<dbReference type="EMBL" id="AL844147">
    <property type="status" value="NOT_ANNOTATED_CDS"/>
    <property type="molecule type" value="Genomic_DNA"/>
</dbReference>
<dbReference type="CCDS" id="CCDS48764.1">
    <molecule id="Q5SPV6-1"/>
</dbReference>
<dbReference type="RefSeq" id="NP_001093864.1">
    <molecule id="Q5SPV6-1"/>
    <property type="nucleotide sequence ID" value="NM_001100394.1"/>
</dbReference>
<dbReference type="BioGRID" id="217209">
    <property type="interactions" value="1"/>
</dbReference>
<dbReference type="FunCoup" id="Q5SPV6">
    <property type="interactions" value="3"/>
</dbReference>
<dbReference type="STRING" id="10090.ENSMUSP00000045288"/>
<dbReference type="PhosphoSitePlus" id="Q5SPV6"/>
<dbReference type="SwissPalm" id="Q5SPV6"/>
<dbReference type="PaxDb" id="10090-ENSMUSP00000045288"/>
<dbReference type="Antibodypedia" id="66471">
    <property type="antibodies" value="10 antibodies from 6 providers"/>
</dbReference>
<dbReference type="Ensembl" id="ENSMUST00000041763.14">
    <molecule id="Q5SPV6-1"/>
    <property type="protein sequence ID" value="ENSMUSP00000045288.8"/>
    <property type="gene ID" value="ENSMUSG00000040919.14"/>
</dbReference>
<dbReference type="GeneID" id="75087"/>
<dbReference type="KEGG" id="mmu:75087"/>
<dbReference type="UCSC" id="uc007ihv.1">
    <molecule id="Q5SPV6-1"/>
    <property type="organism name" value="mouse"/>
</dbReference>
<dbReference type="AGR" id="MGI:1922337"/>
<dbReference type="CTD" id="129852"/>
<dbReference type="MGI" id="MGI:1922337">
    <property type="gene designation" value="4930505A04Rik"/>
</dbReference>
<dbReference type="VEuPathDB" id="HostDB:ENSMUSG00000040919"/>
<dbReference type="eggNOG" id="ENOG502S2FJ">
    <property type="taxonomic scope" value="Eukaryota"/>
</dbReference>
<dbReference type="GeneTree" id="ENSGT00390000005045"/>
<dbReference type="HOGENOM" id="CLU_084649_0_0_1"/>
<dbReference type="InParanoid" id="Q5SPV6"/>
<dbReference type="OMA" id="RNDFQKP"/>
<dbReference type="OrthoDB" id="9971371at2759"/>
<dbReference type="PhylomeDB" id="Q5SPV6"/>
<dbReference type="TreeFam" id="TF337686"/>
<dbReference type="BioGRID-ORCS" id="75087">
    <property type="hits" value="1 hit in 79 CRISPR screens"/>
</dbReference>
<dbReference type="PRO" id="PR:Q5SPV6"/>
<dbReference type="Proteomes" id="UP000000589">
    <property type="component" value="Chromosome 11"/>
</dbReference>
<dbReference type="RNAct" id="Q5SPV6">
    <property type="molecule type" value="protein"/>
</dbReference>
<dbReference type="Bgee" id="ENSMUSG00000040919">
    <property type="expression patterns" value="Expressed in seminiferous tubule of testis and 29 other cell types or tissues"/>
</dbReference>
<dbReference type="ExpressionAtlas" id="Q5SPV6">
    <property type="expression patterns" value="baseline and differential"/>
</dbReference>
<dbReference type="GO" id="GO:0005929">
    <property type="term" value="C:cilium"/>
    <property type="evidence" value="ECO:0007669"/>
    <property type="project" value="UniProtKB-SubCell"/>
</dbReference>
<dbReference type="InterPro" id="IPR031365">
    <property type="entry name" value="CMIP6"/>
</dbReference>
<dbReference type="PANTHER" id="PTHR35087:SF1">
    <property type="entry name" value="RIKEN CDNA 4930505A04 GENE"/>
    <property type="match status" value="1"/>
</dbReference>
<dbReference type="PANTHER" id="PTHR35087">
    <property type="entry name" value="SIMILAR TO HYPOTHETICAL PROTEIN FLJ40298"/>
    <property type="match status" value="1"/>
</dbReference>
<dbReference type="Pfam" id="PF15667">
    <property type="entry name" value="CMIP6"/>
    <property type="match status" value="1"/>
</dbReference>
<accession>Q5SPV6</accession>
<accession>Q810N4</accession>
<accession>Q9D580</accession>
<sequence length="233" mass="26410">MEGEEKQQQHKTEDDGIACVAERKVEIKNEKSPGKSTQHPKPCVDRRRVNYAKFIHTNARTYNEPVPYIDNKGPEKQRKWWFHNEAPKHVSQPSYDTKSVQRSDFQKPACPLVLPVKHSRMQKPSCGIVPLTSLDVSGEHENNFVEYISFIHQYDARRTPNEPIKGKKHGTFVQREIKLGAMPIVPKAPEVLLNTLESGSSEQPQKTDKGNSSGDKVTSPGLCQQNSQELLET</sequence>
<organism>
    <name type="scientific">Mus musculus</name>
    <name type="common">Mouse</name>
    <dbReference type="NCBI Taxonomy" id="10090"/>
    <lineage>
        <taxon>Eukaryota</taxon>
        <taxon>Metazoa</taxon>
        <taxon>Chordata</taxon>
        <taxon>Craniata</taxon>
        <taxon>Vertebrata</taxon>
        <taxon>Euteleostomi</taxon>
        <taxon>Mammalia</taxon>
        <taxon>Eutheria</taxon>
        <taxon>Euarchontoglires</taxon>
        <taxon>Glires</taxon>
        <taxon>Rodentia</taxon>
        <taxon>Myomorpha</taxon>
        <taxon>Muroidea</taxon>
        <taxon>Muridae</taxon>
        <taxon>Murinae</taxon>
        <taxon>Mus</taxon>
        <taxon>Mus</taxon>
    </lineage>
</organism>
<protein>
    <recommendedName>
        <fullName>Ciliary microtubule inner protein 6</fullName>
    </recommendedName>
</protein>